<reference key="1">
    <citation type="submission" date="2007-10" db="EMBL/GenBank/DDBJ databases">
        <title>Complete sequence of Methanococcus maripaludis C6.</title>
        <authorList>
            <consortium name="US DOE Joint Genome Institute"/>
            <person name="Copeland A."/>
            <person name="Lucas S."/>
            <person name="Lapidus A."/>
            <person name="Barry K."/>
            <person name="Glavina del Rio T."/>
            <person name="Dalin E."/>
            <person name="Tice H."/>
            <person name="Pitluck S."/>
            <person name="Clum A."/>
            <person name="Schmutz J."/>
            <person name="Larimer F."/>
            <person name="Land M."/>
            <person name="Hauser L."/>
            <person name="Kyrpides N."/>
            <person name="Mikhailova N."/>
            <person name="Sieprawska-Lupa M."/>
            <person name="Whitman W.B."/>
            <person name="Richardson P."/>
        </authorList>
    </citation>
    <scope>NUCLEOTIDE SEQUENCE [LARGE SCALE GENOMIC DNA]</scope>
    <source>
        <strain>C6 / ATCC BAA-1332</strain>
    </source>
</reference>
<accession>A9A6C2</accession>
<name>IF1A_METM6</name>
<protein>
    <recommendedName>
        <fullName evidence="1">Translation initiation factor 1A</fullName>
        <shortName evidence="1">aIF-1A</shortName>
    </recommendedName>
</protein>
<organism>
    <name type="scientific">Methanococcus maripaludis (strain C6 / ATCC BAA-1332)</name>
    <dbReference type="NCBI Taxonomy" id="444158"/>
    <lineage>
        <taxon>Archaea</taxon>
        <taxon>Methanobacteriati</taxon>
        <taxon>Methanobacteriota</taxon>
        <taxon>Methanomada group</taxon>
        <taxon>Methanococci</taxon>
        <taxon>Methanococcales</taxon>
        <taxon>Methanococcaceae</taxon>
        <taxon>Methanococcus</taxon>
    </lineage>
</organism>
<dbReference type="EMBL" id="CP000867">
    <property type="protein sequence ID" value="ABX01110.1"/>
    <property type="molecule type" value="Genomic_DNA"/>
</dbReference>
<dbReference type="SMR" id="A9A6C2"/>
<dbReference type="STRING" id="444158.MmarC6_0289"/>
<dbReference type="KEGG" id="mmx:MmarC6_0289"/>
<dbReference type="eggNOG" id="arCOG01179">
    <property type="taxonomic scope" value="Archaea"/>
</dbReference>
<dbReference type="HOGENOM" id="CLU_109098_1_2_2"/>
<dbReference type="OrthoDB" id="2586at2157"/>
<dbReference type="PhylomeDB" id="A9A6C2"/>
<dbReference type="GO" id="GO:0003723">
    <property type="term" value="F:RNA binding"/>
    <property type="evidence" value="ECO:0007669"/>
    <property type="project" value="InterPro"/>
</dbReference>
<dbReference type="GO" id="GO:0003743">
    <property type="term" value="F:translation initiation factor activity"/>
    <property type="evidence" value="ECO:0007669"/>
    <property type="project" value="UniProtKB-UniRule"/>
</dbReference>
<dbReference type="CDD" id="cd05793">
    <property type="entry name" value="S1_IF1A"/>
    <property type="match status" value="1"/>
</dbReference>
<dbReference type="Gene3D" id="2.40.50.140">
    <property type="entry name" value="Nucleic acid-binding proteins"/>
    <property type="match status" value="1"/>
</dbReference>
<dbReference type="HAMAP" id="MF_00216">
    <property type="entry name" value="aIF_1A"/>
    <property type="match status" value="1"/>
</dbReference>
<dbReference type="InterPro" id="IPR012340">
    <property type="entry name" value="NA-bd_OB-fold"/>
</dbReference>
<dbReference type="InterPro" id="IPR006196">
    <property type="entry name" value="RNA-binding_domain_S1_IF1"/>
</dbReference>
<dbReference type="InterPro" id="IPR001253">
    <property type="entry name" value="TIF_eIF-1A"/>
</dbReference>
<dbReference type="InterPro" id="IPR018104">
    <property type="entry name" value="TIF_eIF-1A_CS"/>
</dbReference>
<dbReference type="NCBIfam" id="TIGR00523">
    <property type="entry name" value="eIF-1A"/>
    <property type="match status" value="1"/>
</dbReference>
<dbReference type="NCBIfam" id="NF003084">
    <property type="entry name" value="PRK04012.1-3"/>
    <property type="match status" value="1"/>
</dbReference>
<dbReference type="NCBIfam" id="NF003085">
    <property type="entry name" value="PRK04012.1-5"/>
    <property type="match status" value="1"/>
</dbReference>
<dbReference type="PANTHER" id="PTHR21668">
    <property type="entry name" value="EIF-1A"/>
    <property type="match status" value="1"/>
</dbReference>
<dbReference type="Pfam" id="PF01176">
    <property type="entry name" value="eIF-1a"/>
    <property type="match status" value="1"/>
</dbReference>
<dbReference type="SMART" id="SM00652">
    <property type="entry name" value="eIF1a"/>
    <property type="match status" value="1"/>
</dbReference>
<dbReference type="SUPFAM" id="SSF50249">
    <property type="entry name" value="Nucleic acid-binding proteins"/>
    <property type="match status" value="1"/>
</dbReference>
<dbReference type="PROSITE" id="PS01262">
    <property type="entry name" value="IF1A"/>
    <property type="match status" value="1"/>
</dbReference>
<dbReference type="PROSITE" id="PS50832">
    <property type="entry name" value="S1_IF1_TYPE"/>
    <property type="match status" value="1"/>
</dbReference>
<sequence>MRGQQAPPQQPTRVRTPRENENEVLGVIEQMLGASRVRVRCMDGKLRMGRIPGKLKRKIWVREDDVVIVTPWEVQSDEKCDVIWRYTKGQVDWLNKKGYLDFMR</sequence>
<proteinExistence type="inferred from homology"/>
<feature type="chain" id="PRO_1000099964" description="Translation initiation factor 1A">
    <location>
        <begin position="1"/>
        <end position="104"/>
    </location>
</feature>
<feature type="domain" description="S1-like" evidence="1">
    <location>
        <begin position="12"/>
        <end position="87"/>
    </location>
</feature>
<feature type="region of interest" description="Disordered" evidence="2">
    <location>
        <begin position="1"/>
        <end position="20"/>
    </location>
</feature>
<feature type="compositionally biased region" description="Low complexity" evidence="2">
    <location>
        <begin position="1"/>
        <end position="14"/>
    </location>
</feature>
<evidence type="ECO:0000255" key="1">
    <source>
        <dbReference type="HAMAP-Rule" id="MF_00216"/>
    </source>
</evidence>
<evidence type="ECO:0000256" key="2">
    <source>
        <dbReference type="SAM" id="MobiDB-lite"/>
    </source>
</evidence>
<keyword id="KW-0396">Initiation factor</keyword>
<keyword id="KW-0648">Protein biosynthesis</keyword>
<gene>
    <name type="primary">eIF1A</name>
    <name type="ordered locus">MmarC6_0289</name>
</gene>
<comment type="function">
    <text evidence="1">Seems to be required for maximal rate of protein biosynthesis. Enhances ribosome dissociation into subunits and stabilizes the binding of the initiator Met-tRNA(I) to 40 S ribosomal subunits.</text>
</comment>
<comment type="similarity">
    <text evidence="1">Belongs to the eIF-1A family.</text>
</comment>